<proteinExistence type="inferred from homology"/>
<comment type="function">
    <text evidence="1">Participates in the translocation of lipoproteins from the inner membrane to the outer membrane. Only forms a complex with a lipoprotein if the residue after the N-terminal Cys is not an aspartate (The Asp acts as a targeting signal to indicate that the lipoprotein should stay in the inner membrane).</text>
</comment>
<comment type="subunit">
    <text evidence="1">Monomer.</text>
</comment>
<comment type="subcellular location">
    <subcellularLocation>
        <location evidence="1">Periplasm</location>
    </subcellularLocation>
</comment>
<comment type="similarity">
    <text evidence="1">Belongs to the LolA family.</text>
</comment>
<reference key="1">
    <citation type="submission" date="2006-08" db="EMBL/GenBank/DDBJ databases">
        <title>Complete sequence of Alkalilimnicola ehrilichei MLHE-1.</title>
        <authorList>
            <person name="Copeland A."/>
            <person name="Lucas S."/>
            <person name="Lapidus A."/>
            <person name="Barry K."/>
            <person name="Detter J.C."/>
            <person name="Glavina del Rio T."/>
            <person name="Hammon N."/>
            <person name="Israni S."/>
            <person name="Dalin E."/>
            <person name="Tice H."/>
            <person name="Pitluck S."/>
            <person name="Sims D."/>
            <person name="Brettin T."/>
            <person name="Bruce D."/>
            <person name="Han C."/>
            <person name="Tapia R."/>
            <person name="Gilna P."/>
            <person name="Schmutz J."/>
            <person name="Larimer F."/>
            <person name="Land M."/>
            <person name="Hauser L."/>
            <person name="Kyrpides N."/>
            <person name="Mikhailova N."/>
            <person name="Oremland R.S."/>
            <person name="Hoeft S.E."/>
            <person name="Switzer-Blum J."/>
            <person name="Kulp T."/>
            <person name="King G."/>
            <person name="Tabita R."/>
            <person name="Witte B."/>
            <person name="Santini J.M."/>
            <person name="Basu P."/>
            <person name="Hollibaugh J.T."/>
            <person name="Xie G."/>
            <person name="Stolz J.F."/>
            <person name="Richardson P."/>
        </authorList>
    </citation>
    <scope>NUCLEOTIDE SEQUENCE [LARGE SCALE GENOMIC DNA]</scope>
    <source>
        <strain>ATCC BAA-1101 / DSM 17681 / MLHE-1</strain>
    </source>
</reference>
<organism>
    <name type="scientific">Alkalilimnicola ehrlichii (strain ATCC BAA-1101 / DSM 17681 / MLHE-1)</name>
    <dbReference type="NCBI Taxonomy" id="187272"/>
    <lineage>
        <taxon>Bacteria</taxon>
        <taxon>Pseudomonadati</taxon>
        <taxon>Pseudomonadota</taxon>
        <taxon>Gammaproteobacteria</taxon>
        <taxon>Chromatiales</taxon>
        <taxon>Ectothiorhodospiraceae</taxon>
        <taxon>Alkalilimnicola</taxon>
    </lineage>
</organism>
<keyword id="KW-0143">Chaperone</keyword>
<keyword id="KW-0574">Periplasm</keyword>
<keyword id="KW-0653">Protein transport</keyword>
<keyword id="KW-1185">Reference proteome</keyword>
<keyword id="KW-0732">Signal</keyword>
<keyword id="KW-0813">Transport</keyword>
<sequence>MKIKLAFAVLLALCLSLSVMPVLAEQAATRADLARYYDDVTSLQGRFTQQTHDESGRILEESSGEFWIERPDRFRWNYAEPWPQEIVSDGERLWVYDQDLDQVTVRSLADSLGRGPATLLGGTLGELEEAFELTFPEPGRVALQPREATLDYEHVLLRLEDGVPVELELEDGLGQITVLRLEALERDVEIDPGRFEFQPPEGADVIEAGGGRTL</sequence>
<name>LOLA_ALKEH</name>
<dbReference type="EMBL" id="CP000453">
    <property type="protein sequence ID" value="ABI57057.1"/>
    <property type="molecule type" value="Genomic_DNA"/>
</dbReference>
<dbReference type="RefSeq" id="WP_011629451.1">
    <property type="nucleotide sequence ID" value="NC_008340.1"/>
</dbReference>
<dbReference type="SMR" id="Q0A7Y0"/>
<dbReference type="KEGG" id="aeh:Mlg_1711"/>
<dbReference type="eggNOG" id="COG2834">
    <property type="taxonomic scope" value="Bacteria"/>
</dbReference>
<dbReference type="HOGENOM" id="CLU_087560_0_0_6"/>
<dbReference type="OrthoDB" id="9787361at2"/>
<dbReference type="Proteomes" id="UP000001962">
    <property type="component" value="Chromosome"/>
</dbReference>
<dbReference type="GO" id="GO:0042597">
    <property type="term" value="C:periplasmic space"/>
    <property type="evidence" value="ECO:0007669"/>
    <property type="project" value="UniProtKB-SubCell"/>
</dbReference>
<dbReference type="GO" id="GO:0044874">
    <property type="term" value="P:lipoprotein localization to outer membrane"/>
    <property type="evidence" value="ECO:0007669"/>
    <property type="project" value="UniProtKB-UniRule"/>
</dbReference>
<dbReference type="GO" id="GO:0042953">
    <property type="term" value="P:lipoprotein transport"/>
    <property type="evidence" value="ECO:0007669"/>
    <property type="project" value="InterPro"/>
</dbReference>
<dbReference type="CDD" id="cd16325">
    <property type="entry name" value="LolA"/>
    <property type="match status" value="1"/>
</dbReference>
<dbReference type="Gene3D" id="2.50.20.10">
    <property type="entry name" value="Lipoprotein localisation LolA/LolB/LppX"/>
    <property type="match status" value="1"/>
</dbReference>
<dbReference type="HAMAP" id="MF_00240">
    <property type="entry name" value="LolA"/>
    <property type="match status" value="1"/>
</dbReference>
<dbReference type="InterPro" id="IPR029046">
    <property type="entry name" value="LolA/LolB/LppX"/>
</dbReference>
<dbReference type="InterPro" id="IPR004564">
    <property type="entry name" value="OM_lipoprot_carrier_LolA-like"/>
</dbReference>
<dbReference type="InterPro" id="IPR018323">
    <property type="entry name" value="OM_lipoprot_carrier_LolA_Pbac"/>
</dbReference>
<dbReference type="NCBIfam" id="TIGR00547">
    <property type="entry name" value="lolA"/>
    <property type="match status" value="1"/>
</dbReference>
<dbReference type="PANTHER" id="PTHR35869">
    <property type="entry name" value="OUTER-MEMBRANE LIPOPROTEIN CARRIER PROTEIN"/>
    <property type="match status" value="1"/>
</dbReference>
<dbReference type="PANTHER" id="PTHR35869:SF1">
    <property type="entry name" value="OUTER-MEMBRANE LIPOPROTEIN CARRIER PROTEIN"/>
    <property type="match status" value="1"/>
</dbReference>
<dbReference type="Pfam" id="PF03548">
    <property type="entry name" value="LolA"/>
    <property type="match status" value="1"/>
</dbReference>
<dbReference type="SUPFAM" id="SSF89392">
    <property type="entry name" value="Prokaryotic lipoproteins and lipoprotein localization factors"/>
    <property type="match status" value="1"/>
</dbReference>
<gene>
    <name evidence="1" type="primary">lolA</name>
    <name type="ordered locus">Mlg_1711</name>
</gene>
<feature type="signal peptide" evidence="1">
    <location>
        <begin position="1"/>
        <end position="24"/>
    </location>
</feature>
<feature type="chain" id="PRO_5000132933" description="Outer-membrane lipoprotein carrier protein">
    <location>
        <begin position="25"/>
        <end position="214"/>
    </location>
</feature>
<protein>
    <recommendedName>
        <fullName evidence="1">Outer-membrane lipoprotein carrier protein</fullName>
    </recommendedName>
</protein>
<accession>Q0A7Y0</accession>
<evidence type="ECO:0000255" key="1">
    <source>
        <dbReference type="HAMAP-Rule" id="MF_00240"/>
    </source>
</evidence>